<name>PSBJ_CHLVU</name>
<feature type="chain" id="PRO_0000216585" description="Photosystem II reaction center protein J">
    <location>
        <begin position="1"/>
        <end position="42"/>
    </location>
</feature>
<feature type="transmembrane region" description="Helical" evidence="1">
    <location>
        <begin position="10"/>
        <end position="30"/>
    </location>
</feature>
<sequence length="42" mass="4250">MSNTGTTGRIPLWLVGTVAGTAALTLVAVFFYGSYVGLGSSL</sequence>
<accession>P56338</accession>
<proteinExistence type="inferred from homology"/>
<organism>
    <name type="scientific">Chlorella vulgaris</name>
    <name type="common">Green alga</name>
    <dbReference type="NCBI Taxonomy" id="3077"/>
    <lineage>
        <taxon>Eukaryota</taxon>
        <taxon>Viridiplantae</taxon>
        <taxon>Chlorophyta</taxon>
        <taxon>core chlorophytes</taxon>
        <taxon>Trebouxiophyceae</taxon>
        <taxon>Chlorellales</taxon>
        <taxon>Chlorellaceae</taxon>
        <taxon>Chlorella clade</taxon>
        <taxon>Chlorella</taxon>
    </lineage>
</organism>
<dbReference type="EMBL" id="AB001684">
    <property type="protein sequence ID" value="BAA57900.1"/>
    <property type="molecule type" value="Genomic_DNA"/>
</dbReference>
<dbReference type="PIR" id="T07253">
    <property type="entry name" value="T07253"/>
</dbReference>
<dbReference type="RefSeq" id="NP_045825.1">
    <property type="nucleotide sequence ID" value="NC_001865.1"/>
</dbReference>
<dbReference type="SMR" id="P56338"/>
<dbReference type="GeneID" id="809190"/>
<dbReference type="GO" id="GO:0009535">
    <property type="term" value="C:chloroplast thylakoid membrane"/>
    <property type="evidence" value="ECO:0007669"/>
    <property type="project" value="UniProtKB-SubCell"/>
</dbReference>
<dbReference type="GO" id="GO:0009539">
    <property type="term" value="C:photosystem II reaction center"/>
    <property type="evidence" value="ECO:0007669"/>
    <property type="project" value="InterPro"/>
</dbReference>
<dbReference type="GO" id="GO:0015979">
    <property type="term" value="P:photosynthesis"/>
    <property type="evidence" value="ECO:0007669"/>
    <property type="project" value="UniProtKB-UniRule"/>
</dbReference>
<dbReference type="Gene3D" id="6.10.250.2070">
    <property type="match status" value="1"/>
</dbReference>
<dbReference type="HAMAP" id="MF_01305">
    <property type="entry name" value="PSII_PsbJ"/>
    <property type="match status" value="1"/>
</dbReference>
<dbReference type="InterPro" id="IPR002682">
    <property type="entry name" value="PSII_PsbJ"/>
</dbReference>
<dbReference type="InterPro" id="IPR037267">
    <property type="entry name" value="PSII_PsbJ_sf"/>
</dbReference>
<dbReference type="NCBIfam" id="NF002722">
    <property type="entry name" value="PRK02565.1"/>
    <property type="match status" value="1"/>
</dbReference>
<dbReference type="PANTHER" id="PTHR34812">
    <property type="entry name" value="PHOTOSYSTEM II REACTION CENTER PROTEIN J"/>
    <property type="match status" value="1"/>
</dbReference>
<dbReference type="PANTHER" id="PTHR34812:SF3">
    <property type="entry name" value="PHOTOSYSTEM II REACTION CENTER PROTEIN J"/>
    <property type="match status" value="1"/>
</dbReference>
<dbReference type="Pfam" id="PF01788">
    <property type="entry name" value="PsbJ"/>
    <property type="match status" value="1"/>
</dbReference>
<dbReference type="SUPFAM" id="SSF161021">
    <property type="entry name" value="Photosystem II reaction center protein J, PsbJ"/>
    <property type="match status" value="1"/>
</dbReference>
<gene>
    <name evidence="1" type="primary">psbJ</name>
</gene>
<keyword id="KW-0150">Chloroplast</keyword>
<keyword id="KW-0472">Membrane</keyword>
<keyword id="KW-0602">Photosynthesis</keyword>
<keyword id="KW-0604">Photosystem II</keyword>
<keyword id="KW-0934">Plastid</keyword>
<keyword id="KW-0674">Reaction center</keyword>
<keyword id="KW-0793">Thylakoid</keyword>
<keyword id="KW-0812">Transmembrane</keyword>
<keyword id="KW-1133">Transmembrane helix</keyword>
<geneLocation type="chloroplast"/>
<reference key="1">
    <citation type="journal article" date="1997" name="Proc. Natl. Acad. Sci. U.S.A.">
        <title>Complete nucleotide sequence of the chloroplast genome from the green alga Chlorella vulgaris: the existence of genes possibly involved in chloroplast division.</title>
        <authorList>
            <person name="Wakasugi T."/>
            <person name="Nagai T."/>
            <person name="Kapoor M."/>
            <person name="Sugita M."/>
            <person name="Ito M."/>
            <person name="Ito S."/>
            <person name="Tsudzuki J."/>
            <person name="Nakashima K."/>
            <person name="Tsudzuki T."/>
            <person name="Suzuki Y."/>
            <person name="Hamada A."/>
            <person name="Ohta T."/>
            <person name="Inamura A."/>
            <person name="Yoshinaga K."/>
            <person name="Sugiura M."/>
        </authorList>
    </citation>
    <scope>NUCLEOTIDE SEQUENCE [LARGE SCALE GENOMIC DNA]</scope>
    <source>
        <strain>IAM C-27 / Tamiya</strain>
    </source>
</reference>
<comment type="function">
    <text evidence="1">One of the components of the core complex of photosystem II (PSII). PSII is a light-driven water:plastoquinone oxidoreductase that uses light energy to abstract electrons from H(2)O, generating O(2) and a proton gradient subsequently used for ATP formation. It consists of a core antenna complex that captures photons, and an electron transfer chain that converts photonic excitation into a charge separation.</text>
</comment>
<comment type="subunit">
    <text evidence="1">PSII is composed of 1 copy each of membrane proteins PsbA, PsbB, PsbC, PsbD, PsbE, PsbF, PsbH, PsbI, PsbJ, PsbK, PsbL, PsbM, PsbT, PsbX, PsbY, PsbZ, Psb30/Ycf12, at least 3 peripheral proteins of the oxygen-evolving complex and a large number of cofactors. It forms dimeric complexes.</text>
</comment>
<comment type="subcellular location">
    <subcellularLocation>
        <location evidence="1">Plastid</location>
        <location evidence="1">Chloroplast thylakoid membrane</location>
        <topology evidence="1">Single-pass membrane protein</topology>
    </subcellularLocation>
</comment>
<comment type="similarity">
    <text evidence="1">Belongs to the PsbJ family.</text>
</comment>
<evidence type="ECO:0000255" key="1">
    <source>
        <dbReference type="HAMAP-Rule" id="MF_01305"/>
    </source>
</evidence>
<protein>
    <recommendedName>
        <fullName evidence="1">Photosystem II reaction center protein J</fullName>
        <shortName evidence="1">PSII-J</shortName>
    </recommendedName>
</protein>